<comment type="function">
    <text>Required for disulfide bond formation in some periplasmic proteins. Acts by transferring its disulfide bond to other proteins and is reduced in the process. DsbC is reoxidized by a yet uncharacterized protein. Also acts as a disulfide isomerase.</text>
</comment>
<comment type="subunit">
    <text>Homodimer.</text>
</comment>
<comment type="subcellular location">
    <subcellularLocation>
        <location>Periplasm</location>
    </subcellularLocation>
</comment>
<comment type="similarity">
    <text evidence="3">Belongs to the thioredoxin family. DsbC subfamily.</text>
</comment>
<evidence type="ECO:0000250" key="1"/>
<evidence type="ECO:0000255" key="2">
    <source>
        <dbReference type="PROSITE-ProRule" id="PRU00691"/>
    </source>
</evidence>
<evidence type="ECO:0000305" key="3"/>
<protein>
    <recommendedName>
        <fullName>Thiol:disulfide interchange protein DsbC</fullName>
    </recommendedName>
</protein>
<accession>P39691</accession>
<accession>E0SLQ6</accession>
<feature type="signal peptide" evidence="1">
    <location>
        <begin position="1"/>
        <end position="21"/>
    </location>
</feature>
<feature type="chain" id="PRO_0000034275" description="Thiol:disulfide interchange protein DsbC">
    <location>
        <begin position="22"/>
        <end position="238"/>
    </location>
</feature>
<feature type="domain" description="Thioredoxin" evidence="2">
    <location>
        <begin position="61"/>
        <end position="232"/>
    </location>
</feature>
<feature type="disulfide bond" description="Redox-active" evidence="2">
    <location>
        <begin position="119"/>
        <end position="122"/>
    </location>
</feature>
<organism>
    <name type="scientific">Dickeya dadantii (strain 3937)</name>
    <name type="common">Erwinia chrysanthemi (strain 3937)</name>
    <dbReference type="NCBI Taxonomy" id="198628"/>
    <lineage>
        <taxon>Bacteria</taxon>
        <taxon>Pseudomonadati</taxon>
        <taxon>Pseudomonadota</taxon>
        <taxon>Gammaproteobacteria</taxon>
        <taxon>Enterobacterales</taxon>
        <taxon>Pectobacteriaceae</taxon>
        <taxon>Dickeya</taxon>
    </lineage>
</organism>
<dbReference type="EMBL" id="X76687">
    <property type="protein sequence ID" value="CAA54108.1"/>
    <property type="molecule type" value="Genomic_DNA"/>
</dbReference>
<dbReference type="EMBL" id="CP002038">
    <property type="protein sequence ID" value="ADM96890.1"/>
    <property type="molecule type" value="Genomic_DNA"/>
</dbReference>
<dbReference type="PIR" id="S44444">
    <property type="entry name" value="S44444"/>
</dbReference>
<dbReference type="RefSeq" id="WP_013316367.1">
    <property type="nucleotide sequence ID" value="NC_014500.1"/>
</dbReference>
<dbReference type="SMR" id="P39691"/>
<dbReference type="STRING" id="198628.Dda3937_02295"/>
<dbReference type="GeneID" id="55487571"/>
<dbReference type="KEGG" id="ddd:Dda3937_02295"/>
<dbReference type="PATRIC" id="fig|198628.6.peg.693"/>
<dbReference type="eggNOG" id="COG1651">
    <property type="taxonomic scope" value="Bacteria"/>
</dbReference>
<dbReference type="HOGENOM" id="CLU_083593_0_0_6"/>
<dbReference type="OrthoDB" id="12976at2"/>
<dbReference type="Proteomes" id="UP000006859">
    <property type="component" value="Chromosome"/>
</dbReference>
<dbReference type="GO" id="GO:0042597">
    <property type="term" value="C:periplasmic space"/>
    <property type="evidence" value="ECO:0007669"/>
    <property type="project" value="UniProtKB-SubCell"/>
</dbReference>
<dbReference type="GO" id="GO:0015036">
    <property type="term" value="F:disulfide oxidoreductase activity"/>
    <property type="evidence" value="ECO:0007669"/>
    <property type="project" value="UniProtKB-ARBA"/>
</dbReference>
<dbReference type="CDD" id="cd03020">
    <property type="entry name" value="DsbA_DsbC_DsbG"/>
    <property type="match status" value="1"/>
</dbReference>
<dbReference type="FunFam" id="3.40.30.10:FF:000083">
    <property type="entry name" value="Thiol:disulfide interchange protein"/>
    <property type="match status" value="1"/>
</dbReference>
<dbReference type="Gene3D" id="3.10.450.70">
    <property type="entry name" value="Disulphide bond isomerase, DsbC/G, N-terminal"/>
    <property type="match status" value="1"/>
</dbReference>
<dbReference type="Gene3D" id="3.40.30.10">
    <property type="entry name" value="Glutaredoxin"/>
    <property type="match status" value="1"/>
</dbReference>
<dbReference type="InterPro" id="IPR033954">
    <property type="entry name" value="DiS-bond_Isoase_DsbC/G"/>
</dbReference>
<dbReference type="InterPro" id="IPR018950">
    <property type="entry name" value="DiS-bond_isomerase_DsbC/G_N"/>
</dbReference>
<dbReference type="InterPro" id="IPR009094">
    <property type="entry name" value="DiS-bond_isomerase_DsbC/G_N_sf"/>
</dbReference>
<dbReference type="InterPro" id="IPR051470">
    <property type="entry name" value="Thiol:disulfide_interchange"/>
</dbReference>
<dbReference type="InterPro" id="IPR012336">
    <property type="entry name" value="Thioredoxin-like_fold"/>
</dbReference>
<dbReference type="InterPro" id="IPR036249">
    <property type="entry name" value="Thioredoxin-like_sf"/>
</dbReference>
<dbReference type="InterPro" id="IPR017937">
    <property type="entry name" value="Thioredoxin_CS"/>
</dbReference>
<dbReference type="InterPro" id="IPR013766">
    <property type="entry name" value="Thioredoxin_domain"/>
</dbReference>
<dbReference type="NCBIfam" id="NF008129">
    <property type="entry name" value="PRK10877.1"/>
    <property type="match status" value="1"/>
</dbReference>
<dbReference type="PANTHER" id="PTHR35272:SF3">
    <property type="entry name" value="THIOL:DISULFIDE INTERCHANGE PROTEIN DSBC"/>
    <property type="match status" value="1"/>
</dbReference>
<dbReference type="PANTHER" id="PTHR35272">
    <property type="entry name" value="THIOL:DISULFIDE INTERCHANGE PROTEIN DSBC-RELATED"/>
    <property type="match status" value="1"/>
</dbReference>
<dbReference type="Pfam" id="PF10411">
    <property type="entry name" value="DsbC_N"/>
    <property type="match status" value="1"/>
</dbReference>
<dbReference type="Pfam" id="PF13098">
    <property type="entry name" value="Thioredoxin_2"/>
    <property type="match status" value="1"/>
</dbReference>
<dbReference type="SUPFAM" id="SSF54423">
    <property type="entry name" value="DsbC/DsbG N-terminal domain-like"/>
    <property type="match status" value="1"/>
</dbReference>
<dbReference type="SUPFAM" id="SSF52833">
    <property type="entry name" value="Thioredoxin-like"/>
    <property type="match status" value="1"/>
</dbReference>
<dbReference type="PROSITE" id="PS00194">
    <property type="entry name" value="THIOREDOXIN_1"/>
    <property type="match status" value="1"/>
</dbReference>
<dbReference type="PROSITE" id="PS51352">
    <property type="entry name" value="THIOREDOXIN_2"/>
    <property type="match status" value="1"/>
</dbReference>
<name>DSBC_DICD3</name>
<reference key="1">
    <citation type="journal article" date="1994" name="EMBO J.">
        <title>Characterization of DsbC, a periplasmic protein of Erwinia chrysanthemi and Escherichia coli with disulfide isomerase activity.</title>
        <authorList>
            <person name="Shevchik V.E."/>
            <person name="Condemine G."/>
            <person name="Robert-Baudouy J."/>
        </authorList>
    </citation>
    <scope>NUCLEOTIDE SEQUENCE [GENOMIC DNA]</scope>
    <source>
        <strain>3937</strain>
    </source>
</reference>
<reference key="2">
    <citation type="journal article" date="2011" name="J. Bacteriol.">
        <title>Genome sequence of the plant-pathogenic bacterium Dickeya dadantii 3937.</title>
        <authorList>
            <person name="Glasner J.D."/>
            <person name="Yang C.H."/>
            <person name="Reverchon S."/>
            <person name="Hugouvieux-Cotte-Pattat N."/>
            <person name="Condemine G."/>
            <person name="Bohin J.P."/>
            <person name="Van Gijsegem F."/>
            <person name="Yang S."/>
            <person name="Franza T."/>
            <person name="Expert D."/>
            <person name="Plunkett G. III"/>
            <person name="San Francisco M.J."/>
            <person name="Charkowski A.O."/>
            <person name="Py B."/>
            <person name="Bell K."/>
            <person name="Rauscher L."/>
            <person name="Rodriguez-Palenzuela P."/>
            <person name="Toussaint A."/>
            <person name="Holeva M.C."/>
            <person name="He S.Y."/>
            <person name="Douet V."/>
            <person name="Boccara M."/>
            <person name="Blanco C."/>
            <person name="Toth I."/>
            <person name="Anderson B.D."/>
            <person name="Biehl B.S."/>
            <person name="Mau B."/>
            <person name="Flynn S.M."/>
            <person name="Barras F."/>
            <person name="Lindeberg M."/>
            <person name="Birch P.R."/>
            <person name="Tsuyumu S."/>
            <person name="Shi X."/>
            <person name="Hibbing M."/>
            <person name="Yap M.N."/>
            <person name="Carpentier M."/>
            <person name="Dassa E."/>
            <person name="Umehara M."/>
            <person name="Kim J.F."/>
            <person name="Rusch M."/>
            <person name="Soni P."/>
            <person name="Mayhew G.F."/>
            <person name="Fouts D.E."/>
            <person name="Gill S.R."/>
            <person name="Blattner F.R."/>
            <person name="Keen N.T."/>
            <person name="Perna N.T."/>
        </authorList>
    </citation>
    <scope>NUCLEOTIDE SEQUENCE [LARGE SCALE GENOMIC DNA]</scope>
    <source>
        <strain>3937</strain>
    </source>
</reference>
<gene>
    <name type="primary">dsbC</name>
    <name type="ordered locus">Dda3937_02295</name>
</gene>
<keyword id="KW-1015">Disulfide bond</keyword>
<keyword id="KW-0574">Periplasm</keyword>
<keyword id="KW-0676">Redox-active center</keyword>
<keyword id="KW-1185">Reference proteome</keyword>
<keyword id="KW-0732">Signal</keyword>
<proteinExistence type="inferred from homology"/>
<sequence length="238" mass="25907">MKKRVVLFSLLTLALSGVARADDAAIKQTLNRLGLQSAEVKDSPIGGMKTVLTENGVLYITEDGKHLLQGPLYDVSGKTPVNVTNHILNERLDALKDQMIVYKAPQEKHVITVFTDITCGYCHKLHEQMKDYNALGITVRYLAYPRQGMNSQAAKDMQSIWCVADRNKAFDAAMKGDDVSPATCKTDIGAHYQLGVLFGVQGTPAIVLDDGTVVPGYQPPKEMMAMLDAHKASLKSGG</sequence>